<accession>P39706</accession>
<accession>D6VPL8</accession>
<comment type="function">
    <text evidence="3 4 8 9">Component of the Set1C/COMPASS complex that specifically mono-, di- and trimethylates histone H3 to form H3K4me1/2/3, which subsequently plays a role in telomere length maintenance and transcription elongation regulation (PubMed:11742990, PubMed:11805083). COMPASS recognizes ubiquitinated H2B on one face of the nucleosome which stimulates the methylation of H3 on the opposing face (PubMed:31922488). SWD1/CPS50 acts as an assembly and regulatory hub for COMPASS complex formation (PubMed:30100186). Serves as a highly utilized surface for COMPASS interaction with the nucleosome (PubMed:31922488).</text>
</comment>
<comment type="subunit">
    <text evidence="2 3 7 8 9">Component of the Set1C/COMPASS complex which consists of SET1(2), BRE2(2), SPP1(2), SDC1(1), SHG1(1), SWD1(1), SWD2(1), and SWD3(1).</text>
</comment>
<comment type="interaction">
    <interactant intactId="EBI-20737">
        <id>P39706</id>
    </interactant>
    <interactant intactId="EBI-20881">
        <id>P38123</id>
        <label>SWD3</label>
    </interactant>
    <organismsDiffer>false</organismsDiffer>
    <experiments>7</experiments>
</comment>
<comment type="subcellular location">
    <subcellularLocation>
        <location evidence="6">Nucleus</location>
    </subcellularLocation>
    <subcellularLocation>
        <location evidence="6">Chromosome</location>
        <location evidence="6">Telomere</location>
    </subcellularLocation>
</comment>
<comment type="miscellaneous">
    <text evidence="5">Present with 907 molecules/cell in log phase SD medium.</text>
</comment>
<keyword id="KW-0002">3D-structure</keyword>
<keyword id="KW-0158">Chromosome</keyword>
<keyword id="KW-0539">Nucleus</keyword>
<keyword id="KW-1185">Reference proteome</keyword>
<keyword id="KW-0677">Repeat</keyword>
<keyword id="KW-0779">Telomere</keyword>
<keyword id="KW-0853">WD repeat</keyword>
<name>SWD1_YEAST</name>
<protein>
    <recommendedName>
        <fullName evidence="11">COMPASS component SWD1</fullName>
    </recommendedName>
    <alternativeName>
        <fullName evidence="11">Complex proteins associated with SET1 protein SWD1</fullName>
    </alternativeName>
    <alternativeName>
        <fullName evidence="11">Set1C component SWD1</fullName>
    </alternativeName>
</protein>
<feature type="chain" id="PRO_0000051251" description="COMPASS component SWD1">
    <location>
        <begin position="1"/>
        <end position="426"/>
    </location>
</feature>
<feature type="repeat" description="WD 1" evidence="1">
    <location>
        <begin position="24"/>
        <end position="63"/>
    </location>
</feature>
<feature type="repeat" description="WD 2" evidence="1">
    <location>
        <begin position="70"/>
        <end position="109"/>
    </location>
</feature>
<feature type="repeat" description="WD 3" evidence="1">
    <location>
        <begin position="212"/>
        <end position="251"/>
    </location>
</feature>
<feature type="repeat" description="WD 4" evidence="1">
    <location>
        <begin position="264"/>
        <end position="307"/>
    </location>
</feature>
<feature type="repeat" description="WD 5" evidence="1">
    <location>
        <begin position="310"/>
        <end position="350"/>
    </location>
</feature>
<feature type="binding site" evidence="9 14">
    <location>
        <position position="236"/>
    </location>
    <ligand>
        <name>DNA</name>
        <dbReference type="ChEBI" id="CHEBI:16991"/>
    </ligand>
</feature>
<feature type="binding site" evidence="9 14">
    <location>
        <position position="266"/>
    </location>
    <ligand>
        <name>DNA</name>
        <dbReference type="ChEBI" id="CHEBI:16991"/>
    </ligand>
</feature>
<feature type="mutagenesis site" description="Completely abolished H3K4 di- and trimethylation and greatly reduced H3K4 monomethylation." evidence="9">
    <original>I</original>
    <variation>A</variation>
    <location>
        <position position="264"/>
    </location>
</feature>
<feature type="mutagenesis site" description="Decreases H3K4 di- and trimethylation." evidence="9">
    <original>K</original>
    <variation>A</variation>
    <location>
        <position position="266"/>
    </location>
</feature>
<feature type="mutagenesis site" description="Substantially lowers H3K4me3 levels in yeast, while H3K4me1 and H3K4me2 are marginally affected." evidence="8">
    <original>WSAL</original>
    <variation>AAAA</variation>
    <location>
        <begin position="348"/>
        <end position="351"/>
    </location>
</feature>
<feature type="strand" evidence="15">
    <location>
        <begin position="3"/>
        <end position="6"/>
    </location>
</feature>
<feature type="turn" evidence="15">
    <location>
        <begin position="8"/>
        <end position="10"/>
    </location>
</feature>
<feature type="strand" evidence="15">
    <location>
        <begin position="18"/>
        <end position="23"/>
    </location>
</feature>
<feature type="strand" evidence="15">
    <location>
        <begin position="40"/>
        <end position="44"/>
    </location>
</feature>
<feature type="strand" evidence="15">
    <location>
        <begin position="50"/>
        <end position="54"/>
    </location>
</feature>
<feature type="turn" evidence="15">
    <location>
        <begin position="55"/>
        <end position="57"/>
    </location>
</feature>
<feature type="strand" evidence="15">
    <location>
        <begin position="58"/>
        <end position="62"/>
    </location>
</feature>
<feature type="turn" evidence="15">
    <location>
        <begin position="64"/>
        <end position="69"/>
    </location>
</feature>
<feature type="strand" evidence="15">
    <location>
        <begin position="75"/>
        <end position="80"/>
    </location>
</feature>
<feature type="strand" evidence="15">
    <location>
        <begin position="82"/>
        <end position="91"/>
    </location>
</feature>
<feature type="strand" evidence="15">
    <location>
        <begin position="94"/>
        <end position="100"/>
    </location>
</feature>
<feature type="strand" evidence="15">
    <location>
        <begin position="108"/>
        <end position="112"/>
    </location>
</feature>
<feature type="strand" evidence="15">
    <location>
        <begin position="117"/>
        <end position="123"/>
    </location>
</feature>
<feature type="strand" evidence="15">
    <location>
        <begin position="129"/>
        <end position="134"/>
    </location>
</feature>
<feature type="strand" evidence="15">
    <location>
        <begin position="138"/>
        <end position="143"/>
    </location>
</feature>
<feature type="strand" evidence="15">
    <location>
        <begin position="173"/>
        <end position="176"/>
    </location>
</feature>
<feature type="strand" evidence="15">
    <location>
        <begin position="183"/>
        <end position="187"/>
    </location>
</feature>
<feature type="strand" evidence="15">
    <location>
        <begin position="189"/>
        <end position="197"/>
    </location>
</feature>
<feature type="strand" evidence="15">
    <location>
        <begin position="200"/>
        <end position="202"/>
    </location>
</feature>
<feature type="strand" evidence="15">
    <location>
        <begin position="206"/>
        <end position="211"/>
    </location>
</feature>
<feature type="strand" evidence="15">
    <location>
        <begin position="217"/>
        <end position="222"/>
    </location>
</feature>
<feature type="strand" evidence="15">
    <location>
        <begin position="229"/>
        <end position="236"/>
    </location>
</feature>
<feature type="strand" evidence="15">
    <location>
        <begin position="238"/>
        <end position="241"/>
    </location>
</feature>
<feature type="strand" evidence="15">
    <location>
        <begin position="244"/>
        <end position="246"/>
    </location>
</feature>
<feature type="turn" evidence="15">
    <location>
        <begin position="247"/>
        <end position="250"/>
    </location>
</feature>
<feature type="strand" evidence="15">
    <location>
        <begin position="251"/>
        <end position="253"/>
    </location>
</feature>
<feature type="strand" evidence="15">
    <location>
        <begin position="256"/>
        <end position="260"/>
    </location>
</feature>
<feature type="turn" evidence="15">
    <location>
        <begin position="263"/>
        <end position="265"/>
    </location>
</feature>
<feature type="strand" evidence="15">
    <location>
        <begin position="269"/>
        <end position="274"/>
    </location>
</feature>
<feature type="strand" evidence="15">
    <location>
        <begin position="276"/>
        <end position="278"/>
    </location>
</feature>
<feature type="strand" evidence="15">
    <location>
        <begin position="282"/>
        <end position="286"/>
    </location>
</feature>
<feature type="strand" evidence="15">
    <location>
        <begin position="294"/>
        <end position="297"/>
    </location>
</feature>
<feature type="strand" evidence="15">
    <location>
        <begin position="299"/>
        <end position="301"/>
    </location>
</feature>
<feature type="strand" evidence="15">
    <location>
        <begin position="304"/>
        <end position="308"/>
    </location>
</feature>
<feature type="strand" evidence="15">
    <location>
        <begin position="319"/>
        <end position="321"/>
    </location>
</feature>
<feature type="turn" evidence="15">
    <location>
        <begin position="322"/>
        <end position="325"/>
    </location>
</feature>
<feature type="strand" evidence="15">
    <location>
        <begin position="326"/>
        <end position="334"/>
    </location>
</feature>
<feature type="strand" evidence="15">
    <location>
        <begin position="337"/>
        <end position="341"/>
    </location>
</feature>
<feature type="helix" evidence="15">
    <location>
        <begin position="348"/>
        <end position="351"/>
    </location>
</feature>
<feature type="turn" evidence="15">
    <location>
        <begin position="368"/>
        <end position="371"/>
    </location>
</feature>
<feature type="turn" evidence="15">
    <location>
        <begin position="418"/>
        <end position="420"/>
    </location>
</feature>
<dbReference type="EMBL" id="L22015">
    <property type="protein sequence ID" value="AAC04959.1"/>
    <property type="molecule type" value="Genomic_DNA"/>
</dbReference>
<dbReference type="EMBL" id="BK006935">
    <property type="protein sequence ID" value="DAA06988.1"/>
    <property type="molecule type" value="Genomic_DNA"/>
</dbReference>
<dbReference type="PIR" id="S40901">
    <property type="entry name" value="S40901"/>
</dbReference>
<dbReference type="RefSeq" id="NP_009403.1">
    <property type="nucleotide sequence ID" value="NM_001178210.1"/>
</dbReference>
<dbReference type="PDB" id="6BX3">
    <property type="method" value="EM"/>
    <property type="resolution" value="4.30 A"/>
    <property type="chains" value="B=2-413"/>
</dbReference>
<dbReference type="PDB" id="6VEN">
    <property type="method" value="EM"/>
    <property type="resolution" value="3.37 A"/>
    <property type="chains" value="M=1-426"/>
</dbReference>
<dbReference type="PDBsum" id="6BX3"/>
<dbReference type="PDBsum" id="6VEN"/>
<dbReference type="EMDB" id="EMD-21157"/>
<dbReference type="EMDB" id="EMD-7303"/>
<dbReference type="SMR" id="P39706"/>
<dbReference type="BioGRID" id="31792">
    <property type="interactions" value="557"/>
</dbReference>
<dbReference type="ComplexPortal" id="CPX-1039">
    <property type="entry name" value="COMPASS complex"/>
</dbReference>
<dbReference type="DIP" id="DIP-1753N"/>
<dbReference type="FunCoup" id="P39706">
    <property type="interactions" value="1132"/>
</dbReference>
<dbReference type="IntAct" id="P39706">
    <property type="interactions" value="21"/>
</dbReference>
<dbReference type="MINT" id="P39706"/>
<dbReference type="STRING" id="4932.YAR003W"/>
<dbReference type="PaxDb" id="4932-YAR003W"/>
<dbReference type="PeptideAtlas" id="P39706"/>
<dbReference type="EnsemblFungi" id="YAR003W_mRNA">
    <property type="protein sequence ID" value="YAR003W"/>
    <property type="gene ID" value="YAR003W"/>
</dbReference>
<dbReference type="GeneID" id="851265"/>
<dbReference type="KEGG" id="sce:YAR003W"/>
<dbReference type="AGR" id="SGD:S000000064"/>
<dbReference type="SGD" id="S000000064">
    <property type="gene designation" value="SWD1"/>
</dbReference>
<dbReference type="VEuPathDB" id="FungiDB:YAR003W"/>
<dbReference type="eggNOG" id="KOG1273">
    <property type="taxonomic scope" value="Eukaryota"/>
</dbReference>
<dbReference type="GeneTree" id="ENSGT00530000064100"/>
<dbReference type="HOGENOM" id="CLU_032142_0_0_1"/>
<dbReference type="InParanoid" id="P39706"/>
<dbReference type="OMA" id="DYEDDIM"/>
<dbReference type="OrthoDB" id="196858at2759"/>
<dbReference type="BioCyc" id="YEAST:G3O-28868-MONOMER"/>
<dbReference type="Reactome" id="R-SCE-3214841">
    <property type="pathway name" value="PKMTs methylate histone lysines"/>
</dbReference>
<dbReference type="Reactome" id="R-SCE-9772755">
    <property type="pathway name" value="Formation of WDR5-containing histone-modifying complexes"/>
</dbReference>
<dbReference type="BioGRID-ORCS" id="851265">
    <property type="hits" value="2 hits in 10 CRISPR screens"/>
</dbReference>
<dbReference type="PRO" id="PR:P39706"/>
<dbReference type="Proteomes" id="UP000002311">
    <property type="component" value="Chromosome I"/>
</dbReference>
<dbReference type="RNAct" id="P39706">
    <property type="molecule type" value="protein"/>
</dbReference>
<dbReference type="GO" id="GO:0000781">
    <property type="term" value="C:chromosome, telomeric region"/>
    <property type="evidence" value="ECO:0007669"/>
    <property type="project" value="UniProtKB-SubCell"/>
</dbReference>
<dbReference type="GO" id="GO:0005634">
    <property type="term" value="C:nucleus"/>
    <property type="evidence" value="ECO:0000303"/>
    <property type="project" value="ComplexPortal"/>
</dbReference>
<dbReference type="GO" id="GO:0048188">
    <property type="term" value="C:Set1C/COMPASS complex"/>
    <property type="evidence" value="ECO:0000314"/>
    <property type="project" value="UniProtKB"/>
</dbReference>
<dbReference type="GO" id="GO:0006355">
    <property type="term" value="P:regulation of DNA-templated transcription"/>
    <property type="evidence" value="ECO:0000315"/>
    <property type="project" value="SGD"/>
</dbReference>
<dbReference type="GO" id="GO:0031509">
    <property type="term" value="P:subtelomeric heterochromatin formation"/>
    <property type="evidence" value="ECO:0000315"/>
    <property type="project" value="SGD"/>
</dbReference>
<dbReference type="GO" id="GO:0000723">
    <property type="term" value="P:telomere maintenance"/>
    <property type="evidence" value="ECO:0000315"/>
    <property type="project" value="SGD"/>
</dbReference>
<dbReference type="FunFam" id="2.130.10.10:FF:000649">
    <property type="entry name" value="Compass component swd1"/>
    <property type="match status" value="1"/>
</dbReference>
<dbReference type="Gene3D" id="2.130.10.10">
    <property type="entry name" value="YVTN repeat-like/Quinoprotein amine dehydrogenase"/>
    <property type="match status" value="2"/>
</dbReference>
<dbReference type="InterPro" id="IPR037850">
    <property type="entry name" value="RBBP5/Swd1"/>
</dbReference>
<dbReference type="InterPro" id="IPR015943">
    <property type="entry name" value="WD40/YVTN_repeat-like_dom_sf"/>
</dbReference>
<dbReference type="InterPro" id="IPR019775">
    <property type="entry name" value="WD40_repeat_CS"/>
</dbReference>
<dbReference type="InterPro" id="IPR036322">
    <property type="entry name" value="WD40_repeat_dom_sf"/>
</dbReference>
<dbReference type="InterPro" id="IPR001680">
    <property type="entry name" value="WD40_rpt"/>
</dbReference>
<dbReference type="PANTHER" id="PTHR44040">
    <property type="entry name" value="RETINOBLASTOMA-BINDING PROTEIN 5"/>
    <property type="match status" value="1"/>
</dbReference>
<dbReference type="PANTHER" id="PTHR44040:SF1">
    <property type="entry name" value="RETINOBLASTOMA-BINDING PROTEIN 5"/>
    <property type="match status" value="1"/>
</dbReference>
<dbReference type="Pfam" id="PF00400">
    <property type="entry name" value="WD40"/>
    <property type="match status" value="1"/>
</dbReference>
<dbReference type="SMART" id="SM00320">
    <property type="entry name" value="WD40"/>
    <property type="match status" value="5"/>
</dbReference>
<dbReference type="SUPFAM" id="SSF50978">
    <property type="entry name" value="WD40 repeat-like"/>
    <property type="match status" value="1"/>
</dbReference>
<dbReference type="PROSITE" id="PS00678">
    <property type="entry name" value="WD_REPEATS_1"/>
    <property type="match status" value="1"/>
</dbReference>
<dbReference type="PROSITE" id="PS50082">
    <property type="entry name" value="WD_REPEATS_2"/>
    <property type="match status" value="1"/>
</dbReference>
<dbReference type="PROSITE" id="PS50294">
    <property type="entry name" value="WD_REPEATS_REGION"/>
    <property type="match status" value="1"/>
</dbReference>
<sequence>MNILLQDPFAVLKEHPEKLTHTIENPLRTECLQFSPCGDYLALGCANGALVIYDMDTFRPICVPGNMLGAHVRPITSIAWSPDGRLLLTSSRDWSIKLWDLSKPSKPLKEIRFDSPIWGCQWLDAKRRLCVATIFEESDAYVIDFSNDPVASLLSKSDEKQLSSTPDHGYVLVCTVHTKHPNIIIVGTSKGWLDFYKFHSLYQTECIHSLKITSSNIKHLIVSQNGERLAINCSDRTIRQYEISIDDENSAVELTLEHKYQDVINKLQWNCILFSNNTAEYLVASTHGSSAHELYIWETTSGTLVRVLEGAEEELIDINWDFYSMSIVSNGFESGNVYVWSVVIPPKWSALAPDFEEVEENVDYLEKEDEFDEVDEAEQQQGLEQEEEIAIDLRTREQYDVRGNNLLVERFTIPTDYTRIIKMQSS</sequence>
<gene>
    <name evidence="11" type="primary">SWD1</name>
    <name evidence="10" type="synonym">CPS50</name>
    <name evidence="12" type="synonym">SAF49</name>
    <name type="ordered locus">YAR003W</name>
    <name type="ORF">FUN16</name>
</gene>
<evidence type="ECO:0000255" key="1"/>
<evidence type="ECO:0000269" key="2">
    <source>
    </source>
</evidence>
<evidence type="ECO:0000269" key="3">
    <source>
    </source>
</evidence>
<evidence type="ECO:0000269" key="4">
    <source>
    </source>
</evidence>
<evidence type="ECO:0000269" key="5">
    <source>
    </source>
</evidence>
<evidence type="ECO:0000269" key="6">
    <source>
    </source>
</evidence>
<evidence type="ECO:0000269" key="7">
    <source>
    </source>
</evidence>
<evidence type="ECO:0000269" key="8">
    <source>
    </source>
</evidence>
<evidence type="ECO:0000269" key="9">
    <source>
    </source>
</evidence>
<evidence type="ECO:0000303" key="10">
    <source>
    </source>
</evidence>
<evidence type="ECO:0000303" key="11">
    <source>
    </source>
</evidence>
<evidence type="ECO:0000303" key="12">
    <source>
    </source>
</evidence>
<evidence type="ECO:0007744" key="13">
    <source>
        <dbReference type="PDB" id="6BX3"/>
    </source>
</evidence>
<evidence type="ECO:0007744" key="14">
    <source>
        <dbReference type="PDB" id="6VEN"/>
    </source>
</evidence>
<evidence type="ECO:0007829" key="15">
    <source>
        <dbReference type="PDB" id="6VEN"/>
    </source>
</evidence>
<proteinExistence type="evidence at protein level"/>
<reference key="1">
    <citation type="journal article" date="1994" name="Yeast">
        <title>Sequencing of chromosome I of Saccharomyces cerevisiae: analysis of the 42 kbp SPO7-CENI-CDC15 region.</title>
        <authorList>
            <person name="Clark M.W."/>
            <person name="Keng T."/>
            <person name="Storms R.K."/>
            <person name="Zhong W.-W."/>
            <person name="Fortin N."/>
            <person name="Zeng B."/>
            <person name="Delaney S."/>
            <person name="Ouellette B.F.F."/>
            <person name="Barton A.B."/>
            <person name="Kaback D.B."/>
            <person name="Bussey H."/>
        </authorList>
    </citation>
    <scope>NUCLEOTIDE SEQUENCE [GENOMIC DNA]</scope>
    <source>
        <strain>ATCC 204511 / S288c / AB972</strain>
    </source>
</reference>
<reference key="2">
    <citation type="journal article" date="1995" name="Proc. Natl. Acad. Sci. U.S.A.">
        <title>The nucleotide sequence of chromosome I from Saccharomyces cerevisiae.</title>
        <authorList>
            <person name="Bussey H."/>
            <person name="Kaback D.B."/>
            <person name="Zhong W.-W."/>
            <person name="Vo D.H."/>
            <person name="Clark M.W."/>
            <person name="Fortin N."/>
            <person name="Hall J."/>
            <person name="Ouellette B.F.F."/>
            <person name="Keng T."/>
            <person name="Barton A.B."/>
            <person name="Su Y."/>
            <person name="Davies C.J."/>
            <person name="Storms R.K."/>
        </authorList>
    </citation>
    <scope>NUCLEOTIDE SEQUENCE [LARGE SCALE GENOMIC DNA]</scope>
    <source>
        <strain>ATCC 204508 / S288c</strain>
    </source>
</reference>
<reference key="3">
    <citation type="journal article" date="2014" name="G3 (Bethesda)">
        <title>The reference genome sequence of Saccharomyces cerevisiae: Then and now.</title>
        <authorList>
            <person name="Engel S.R."/>
            <person name="Dietrich F.S."/>
            <person name="Fisk D.G."/>
            <person name="Binkley G."/>
            <person name="Balakrishnan R."/>
            <person name="Costanzo M.C."/>
            <person name="Dwight S.S."/>
            <person name="Hitz B.C."/>
            <person name="Karra K."/>
            <person name="Nash R.S."/>
            <person name="Weng S."/>
            <person name="Wong E.D."/>
            <person name="Lloyd P."/>
            <person name="Skrzypek M.S."/>
            <person name="Miyasato S.R."/>
            <person name="Simison M."/>
            <person name="Cherry J.M."/>
        </authorList>
    </citation>
    <scope>GENOME REANNOTATION</scope>
    <source>
        <strain>ATCC 204508 / S288c</strain>
    </source>
</reference>
<reference key="4">
    <citation type="journal article" date="2001" name="EMBO J.">
        <title>The Saccharomyces cerevisiae Set1 complex includes an Ash2 homologue and methylates histone 3 lysine 4.</title>
        <authorList>
            <person name="Roguev A."/>
            <person name="Schaft D."/>
            <person name="Shevchenko A."/>
            <person name="Pijnappel W.W.M.P."/>
            <person name="Wilm M."/>
            <person name="Aasland R."/>
            <person name="Stewart A.F."/>
        </authorList>
    </citation>
    <scope>FUNCTION</scope>
    <scope>SUBUNIT</scope>
</reference>
<reference key="5">
    <citation type="journal article" date="2001" name="Proc. Natl. Acad. Sci. U.S.A.">
        <title>COMPASS: a complex of proteins associated with a trithorax-related SET domain protein.</title>
        <authorList>
            <person name="Miller T."/>
            <person name="Krogan N.J."/>
            <person name="Dover J."/>
            <person name="Erdjument-Bromage H."/>
            <person name="Tempst P."/>
            <person name="Johnston M."/>
            <person name="Greenblatt J.F."/>
            <person name="Shilatifard A."/>
        </authorList>
    </citation>
    <scope>SUBUNIT</scope>
</reference>
<reference key="6">
    <citation type="journal article" date="2002" name="J. Biol. Chem.">
        <title>COMPASS, a histone H3 (Lysine 4) methyltransferase required for telomeric silencing of gene expression.</title>
        <authorList>
            <person name="Krogan N.J."/>
            <person name="Dover J."/>
            <person name="Khorrami S."/>
            <person name="Greenblatt J.F."/>
            <person name="Schneider J."/>
            <person name="Johnston M."/>
            <person name="Shilatifard A."/>
        </authorList>
    </citation>
    <scope>FUNCTION</scope>
</reference>
<reference key="7">
    <citation type="journal article" date="2002" name="Proc. Natl. Acad. Sci. U.S.A.">
        <title>A trithorax-group complex purified from Saccharomyces cerevisiae is required for methylation of histone H3.</title>
        <authorList>
            <person name="Nagy P.L."/>
            <person name="Griesenbeck J."/>
            <person name="Kornberg R.D."/>
            <person name="Cleary M.L."/>
        </authorList>
    </citation>
    <scope>FUNCTION</scope>
</reference>
<reference key="8">
    <citation type="journal article" date="2003" name="Nature">
        <title>Global analysis of protein expression in yeast.</title>
        <authorList>
            <person name="Ghaemmaghami S."/>
            <person name="Huh W.-K."/>
            <person name="Bower K."/>
            <person name="Howson R.W."/>
            <person name="Belle A."/>
            <person name="Dephoure N."/>
            <person name="O'Shea E.K."/>
            <person name="Weissman J.S."/>
        </authorList>
    </citation>
    <scope>LEVEL OF PROTEIN EXPRESSION [LARGE SCALE ANALYSIS]</scope>
</reference>
<reference key="9">
    <citation type="journal article" date="2004" name="Yeast">
        <title>Localization of proteins that are coordinately expressed with Cln2 during the cell cycle.</title>
        <authorList>
            <person name="Sundin B.A."/>
            <person name="Chiu C.-H."/>
            <person name="Riffle M."/>
            <person name="Davis T.N."/>
            <person name="Muller E.G.D."/>
        </authorList>
    </citation>
    <scope>SUBCELLULAR LOCATION</scope>
</reference>
<reference key="10">
    <citation type="journal article" date="2017" name="Cell Discov.">
        <title>Binding to RNA regulates Set1 function.</title>
        <authorList>
            <person name="Luciano P."/>
            <person name="Jeon J."/>
            <person name="El-Kaoutari A."/>
            <person name="Challal D."/>
            <person name="Bonnet A."/>
            <person name="Barucco M."/>
            <person name="Candelli T."/>
            <person name="Jourquin F."/>
            <person name="Lesage P."/>
            <person name="Kim J."/>
            <person name="Libri D."/>
            <person name="Geli V."/>
        </authorList>
    </citation>
    <scope>IDENTIFICATION IN THE SET1C/COMPASS COMPLEX</scope>
</reference>
<reference evidence="13" key="11">
    <citation type="journal article" date="2018" name="Cell">
        <title>Structure and conformational dynamics of a COMPASS histone H3K4 methyltransferase complex.</title>
        <authorList>
            <person name="Qu Q."/>
            <person name="Takahashi Y.H."/>
            <person name="Yang Y."/>
            <person name="Hu H."/>
            <person name="Zhang Y."/>
            <person name="Brunzelle J.S."/>
            <person name="Couture J.F."/>
            <person name="Shilatifard A."/>
            <person name="Skiniotis G."/>
        </authorList>
    </citation>
    <scope>STRUCTURE BY ELECTRON MICROSCOPY (4.30 ANGSTROMS) OF 2-413 WITHIN THE CORE COMPASS COMPLEX</scope>
    <scope>SUBUNIT</scope>
    <scope>FUNCTION</scope>
    <scope>MUTAGENESIS OF 348-TRP--LEU-351</scope>
</reference>
<reference evidence="14" key="12">
    <citation type="journal article" date="2020" name="Elife">
        <title>Structural basis for COMPASS recognition of an H2B-ubiquitinated nucleosome.</title>
        <authorList>
            <person name="Worden E.J."/>
            <person name="Zhang X."/>
            <person name="Wolberger C."/>
        </authorList>
    </citation>
    <scope>STRUCTURE BY ELECTRON MICROSCOPY (3.37 ANGSTROMS) WITHIN THE CORE COMPASS H2B-UBIQUITIN NUCLEOSOME COMPLEX</scope>
    <scope>SUBUNIT</scope>
    <scope>DNA-BINDING</scope>
    <scope>MUTAGENESIS OF ILE-264 AND LYS-266</scope>
    <scope>FUNCTION</scope>
</reference>
<organism>
    <name type="scientific">Saccharomyces cerevisiae (strain ATCC 204508 / S288c)</name>
    <name type="common">Baker's yeast</name>
    <dbReference type="NCBI Taxonomy" id="559292"/>
    <lineage>
        <taxon>Eukaryota</taxon>
        <taxon>Fungi</taxon>
        <taxon>Dikarya</taxon>
        <taxon>Ascomycota</taxon>
        <taxon>Saccharomycotina</taxon>
        <taxon>Saccharomycetes</taxon>
        <taxon>Saccharomycetales</taxon>
        <taxon>Saccharomycetaceae</taxon>
        <taxon>Saccharomyces</taxon>
    </lineage>
</organism>